<reference key="1">
    <citation type="journal article" date="2005" name="PLoS Biol.">
        <title>The genomes of Oryza sativa: a history of duplications.</title>
        <authorList>
            <person name="Yu J."/>
            <person name="Wang J."/>
            <person name="Lin W."/>
            <person name="Li S."/>
            <person name="Li H."/>
            <person name="Zhou J."/>
            <person name="Ni P."/>
            <person name="Dong W."/>
            <person name="Hu S."/>
            <person name="Zeng C."/>
            <person name="Zhang J."/>
            <person name="Zhang Y."/>
            <person name="Li R."/>
            <person name="Xu Z."/>
            <person name="Li S."/>
            <person name="Li X."/>
            <person name="Zheng H."/>
            <person name="Cong L."/>
            <person name="Lin L."/>
            <person name="Yin J."/>
            <person name="Geng J."/>
            <person name="Li G."/>
            <person name="Shi J."/>
            <person name="Liu J."/>
            <person name="Lv H."/>
            <person name="Li J."/>
            <person name="Wang J."/>
            <person name="Deng Y."/>
            <person name="Ran L."/>
            <person name="Shi X."/>
            <person name="Wang X."/>
            <person name="Wu Q."/>
            <person name="Li C."/>
            <person name="Ren X."/>
            <person name="Wang J."/>
            <person name="Wang X."/>
            <person name="Li D."/>
            <person name="Liu D."/>
            <person name="Zhang X."/>
            <person name="Ji Z."/>
            <person name="Zhao W."/>
            <person name="Sun Y."/>
            <person name="Zhang Z."/>
            <person name="Bao J."/>
            <person name="Han Y."/>
            <person name="Dong L."/>
            <person name="Ji J."/>
            <person name="Chen P."/>
            <person name="Wu S."/>
            <person name="Liu J."/>
            <person name="Xiao Y."/>
            <person name="Bu D."/>
            <person name="Tan J."/>
            <person name="Yang L."/>
            <person name="Ye C."/>
            <person name="Zhang J."/>
            <person name="Xu J."/>
            <person name="Zhou Y."/>
            <person name="Yu Y."/>
            <person name="Zhang B."/>
            <person name="Zhuang S."/>
            <person name="Wei H."/>
            <person name="Liu B."/>
            <person name="Lei M."/>
            <person name="Yu H."/>
            <person name="Li Y."/>
            <person name="Xu H."/>
            <person name="Wei S."/>
            <person name="He X."/>
            <person name="Fang L."/>
            <person name="Zhang Z."/>
            <person name="Zhang Y."/>
            <person name="Huang X."/>
            <person name="Su Z."/>
            <person name="Tong W."/>
            <person name="Li J."/>
            <person name="Tong Z."/>
            <person name="Li S."/>
            <person name="Ye J."/>
            <person name="Wang L."/>
            <person name="Fang L."/>
            <person name="Lei T."/>
            <person name="Chen C.-S."/>
            <person name="Chen H.-C."/>
            <person name="Xu Z."/>
            <person name="Li H."/>
            <person name="Huang H."/>
            <person name="Zhang F."/>
            <person name="Xu H."/>
            <person name="Li N."/>
            <person name="Zhao C."/>
            <person name="Li S."/>
            <person name="Dong L."/>
            <person name="Huang Y."/>
            <person name="Li L."/>
            <person name="Xi Y."/>
            <person name="Qi Q."/>
            <person name="Li W."/>
            <person name="Zhang B."/>
            <person name="Hu W."/>
            <person name="Zhang Y."/>
            <person name="Tian X."/>
            <person name="Jiao Y."/>
            <person name="Liang X."/>
            <person name="Jin J."/>
            <person name="Gao L."/>
            <person name="Zheng W."/>
            <person name="Hao B."/>
            <person name="Liu S.-M."/>
            <person name="Wang W."/>
            <person name="Yuan L."/>
            <person name="Cao M."/>
            <person name="McDermott J."/>
            <person name="Samudrala R."/>
            <person name="Wang J."/>
            <person name="Wong G.K.-S."/>
            <person name="Yang H."/>
        </authorList>
    </citation>
    <scope>NUCLEOTIDE SEQUENCE [LARGE SCALE GENOMIC DNA]</scope>
    <source>
        <strain>cv. 93-11</strain>
    </source>
</reference>
<reference key="2">
    <citation type="journal article" date="2005" name="Plant J.">
        <title>OsMADS1, a rice MADS-box factor, controls differentiation of specific cell types in the lemma and palea and is an early-acting regulator of inner floral organs.</title>
        <authorList>
            <person name="Prasad K."/>
            <person name="Parameswaran S."/>
            <person name="Vijayraghavan U."/>
        </authorList>
    </citation>
    <scope>TISSUE SPECIFICITY</scope>
    <scope>DEVELOPMENTAL STAGE</scope>
</reference>
<reference key="3">
    <citation type="journal article" date="2006" name="Funct. Integr. Genomics">
        <title>The auxin-responsive GH3 gene family in rice (Oryza sativa).</title>
        <authorList>
            <person name="Jain M."/>
            <person name="Kaur N."/>
            <person name="Tyagi A.K."/>
            <person name="Khurana J.P."/>
        </authorList>
    </citation>
    <scope>TISSUE SPECIFICITY</scope>
    <scope>INDUCTION</scope>
    <scope>NOMENCLATURE</scope>
</reference>
<reference key="4">
    <citation type="journal article" date="2008" name="Plant Cell">
        <title>Activation of the indole-3-acetic acid-amido synthetase GH3-8 suppresses expansin expression and promotes salicylate- and jasmonate-independent basal immunity in rice.</title>
        <authorList>
            <person name="Ding X."/>
            <person name="Cao Y."/>
            <person name="Huang L."/>
            <person name="Zhao J."/>
            <person name="Xu C."/>
            <person name="Li X."/>
            <person name="Wang S."/>
        </authorList>
    </citation>
    <scope>FUNCTION</scope>
    <scope>CATALYTIC ACTIVITY</scope>
    <scope>DISRUPTION PHENOTYPE</scope>
</reference>
<reference key="5">
    <citation type="journal article" date="2011" name="Plant Cell Physiol.">
        <title>Auxin-responsive OsMGH3, a common downstream target of OsMADS1 and OsMADS6, controls rice floret fertility.</title>
        <authorList>
            <person name="Yadav S.R."/>
            <person name="Khanday I."/>
            <person name="Majhi B.B."/>
            <person name="Veluthambi K."/>
            <person name="Vijayraghavan U."/>
        </authorList>
    </citation>
    <scope>FUNCTION</scope>
    <scope>INDUCTION BY AUXIN</scope>
</reference>
<proteinExistence type="evidence at protein level"/>
<gene>
    <name type="primary">GH3.8</name>
    <name evidence="7" type="synonym">GH3-8</name>
    <name type="ORF">OsI_025789</name>
</gene>
<organism>
    <name type="scientific">Oryza sativa subsp. indica</name>
    <name type="common">Rice</name>
    <dbReference type="NCBI Taxonomy" id="39946"/>
    <lineage>
        <taxon>Eukaryota</taxon>
        <taxon>Viridiplantae</taxon>
        <taxon>Streptophyta</taxon>
        <taxon>Embryophyta</taxon>
        <taxon>Tracheophyta</taxon>
        <taxon>Spermatophyta</taxon>
        <taxon>Magnoliopsida</taxon>
        <taxon>Liliopsida</taxon>
        <taxon>Poales</taxon>
        <taxon>Poaceae</taxon>
        <taxon>BOP clade</taxon>
        <taxon>Oryzoideae</taxon>
        <taxon>Oryzeae</taxon>
        <taxon>Oryzinae</taxon>
        <taxon>Oryza</taxon>
        <taxon>Oryza sativa</taxon>
    </lineage>
</organism>
<name>GH38_ORYSI</name>
<evidence type="ECO:0000250" key="1">
    <source>
        <dbReference type="UniProtKB" id="Q0D4Z6"/>
    </source>
</evidence>
<evidence type="ECO:0000269" key="2">
    <source>
    </source>
</evidence>
<evidence type="ECO:0000269" key="3">
    <source>
    </source>
</evidence>
<evidence type="ECO:0000269" key="4">
    <source>
    </source>
</evidence>
<evidence type="ECO:0000269" key="5">
    <source>
    </source>
</evidence>
<evidence type="ECO:0000303" key="6">
    <source>
    </source>
</evidence>
<evidence type="ECO:0000303" key="7">
    <source>
    </source>
</evidence>
<evidence type="ECO:0000305" key="8"/>
<evidence type="ECO:0000305" key="9">
    <source>
    </source>
</evidence>
<accession>A3BLS0</accession>
<accession>A2YN96</accession>
<accession>Q7XIN9</accession>
<comment type="function">
    <text evidence="4 5">Catalyzes the synthesis of indole-3-acetic acid (IAA)-amino acid conjugates, providing a mechanism for the plant to cope with the presence of excessive free auxin (PubMed:18192436). Produces more IAA-Asp levels than IAA-Ala levels in vitro (PubMed:18192436). May participate in the activation of disease resistance by preventing the accumulation of free IAA, which reduces the expression of a group of auxin-responsive genes encoding expansins that control cell wall loosening and expansion (PubMed:18192436). Contributes to late events in stamen and carpel differentiation, and influences floret fertility (PubMed:22016342).</text>
</comment>
<comment type="tissue specificity">
    <text evidence="2 3">Expressed in the inner floral organs (lodicules, stamens and carpels) and at lower levels in lemmas and paleas.</text>
</comment>
<comment type="developmental stage">
    <text evidence="3">Expressed at early stage of flower development in floral meristem and at later stage in lemma, palea and carpel primordia.</text>
</comment>
<comment type="induction">
    <text evidence="2 5">Induced by auxin.</text>
</comment>
<comment type="disruption phenotype">
    <text evidence="4">Slight increase in disease susceptibility to Xanthomonas oryzae pv oryzae.</text>
</comment>
<comment type="miscellaneous">
    <text evidence="4 5">Plants overexpressing GH3-8 exhibit enhanced disease resistance to Xanthomonas oryzae pv oryzae (PubMed:18192436). Plants overexpressing GH3-8 exhibit abnormal morphology and dwarf phenotype (PubMed:18192436, PubMed:22016342). Plants silencing GH3-8 produce mostly non-viable pollen grains (PubMed:22016342).</text>
</comment>
<comment type="similarity">
    <text evidence="8">Belongs to the IAA-amido conjugating enzyme family.</text>
</comment>
<sequence length="605" mass="66932">MAVMTDVSTTGTALRTPAAGAVKEGDVEKLRFIDEMTTNVDAVQERVLGEILGRNAGTEYLTKCGLDGATDRAAFRAKVPVVSYDDLQPYIQRIANGDRSPILSTHPVSEFLTSSGTSAGERKLMPTIMDELDRRQLLYSLLMPVMNLYVPGLDKGKGLYFLFVKSETKTPGGLTARPVLTSYYKSDHFKNRPYDPYHNYTSPTAAILCADAFQSMYAQMVCGLCQRNDVLRLGAVFASGLLRAIRFLQLNWEQLADDIESGELTPRVTDPSVREAVAAILLPDPELAKLIRAECSKGDWAGIITRVWPNTKYLDVIVTGAMAQYIPTLEFYSGGLPMACTMYASSECYFGLNLRPMCDPSEVSYTIMPNMGYFEFLPVDETGAASGDATQLVDLARVEVGREYELVITTYAGLNRYRVGDVLRVTGFHNAAPQFRFVRRKNVLLSIESDKTDEAELQRAVERASALLRPHGASVVEYTSQACTKRIPGHYVIYWELLTKGAGATVVDADTLGRCCLEMEEALNTVYRQSRVADGSIGPLEIRVVRPGTFEELMDYAISRGASINQYKVPRCVTFPPIVELLDSRVVSSHFSPALPHWTPARRSE</sequence>
<protein>
    <recommendedName>
        <fullName evidence="8">Indole-3-acetic acid-amido synthetase GH3.8</fullName>
        <ecNumber evidence="9">6.3.2.-</ecNumber>
    </recommendedName>
    <alternativeName>
        <fullName evidence="6">Auxin-responsive GH3-like protein 8</fullName>
        <shortName evidence="6">OsGH3-8</shortName>
    </alternativeName>
</protein>
<feature type="chain" id="PRO_0000296247" description="Indole-3-acetic acid-amido synthetase GH3.8">
    <location>
        <begin position="1"/>
        <end position="605"/>
    </location>
</feature>
<feature type="binding site" evidence="1">
    <location>
        <position position="115"/>
    </location>
    <ligand>
        <name>AMP</name>
        <dbReference type="ChEBI" id="CHEBI:456215"/>
    </ligand>
</feature>
<feature type="binding site" evidence="1">
    <location>
        <begin position="342"/>
        <end position="346"/>
    </location>
    <ligand>
        <name>AMP</name>
        <dbReference type="ChEBI" id="CHEBI:456215"/>
    </ligand>
</feature>
<feature type="binding site" evidence="1">
    <location>
        <position position="365"/>
    </location>
    <ligand>
        <name>AMP</name>
        <dbReference type="ChEBI" id="CHEBI:456215"/>
    </ligand>
</feature>
<feature type="binding site" evidence="1">
    <location>
        <position position="421"/>
    </location>
    <ligand>
        <name>AMP</name>
        <dbReference type="ChEBI" id="CHEBI:456215"/>
    </ligand>
</feature>
<feature type="binding site" evidence="1">
    <location>
        <position position="440"/>
    </location>
    <ligand>
        <name>AMP</name>
        <dbReference type="ChEBI" id="CHEBI:456215"/>
    </ligand>
</feature>
<dbReference type="EC" id="6.3.2.-" evidence="9"/>
<dbReference type="EMBL" id="CM000132">
    <property type="status" value="NOT_ANNOTATED_CDS"/>
    <property type="molecule type" value="Genomic_DNA"/>
</dbReference>
<dbReference type="SMR" id="A3BLS0"/>
<dbReference type="EnsemblPlants" id="BGIOSGA023979-TA">
    <property type="protein sequence ID" value="BGIOSGA023979-PA"/>
    <property type="gene ID" value="BGIOSGA023979"/>
</dbReference>
<dbReference type="EnsemblPlants" id="OsGoSa_07g0021440.01">
    <property type="protein sequence ID" value="OsGoSa_07g0021440.01"/>
    <property type="gene ID" value="OsGoSa_07g0021440"/>
</dbReference>
<dbReference type="EnsemblPlants" id="OsIR64_07g0022090.01">
    <property type="protein sequence ID" value="OsIR64_07g0022090.01"/>
    <property type="gene ID" value="OsIR64_07g0022090"/>
</dbReference>
<dbReference type="EnsemblPlants" id="OsKYG_07g0021540.01">
    <property type="protein sequence ID" value="OsKYG_07g0021540.01"/>
    <property type="gene ID" value="OsKYG_07g0021540"/>
</dbReference>
<dbReference type="EnsemblPlants" id="OsLaMu_07g0021420.01">
    <property type="protein sequence ID" value="OsLaMu_07g0021420.01"/>
    <property type="gene ID" value="OsLaMu_07g0021420"/>
</dbReference>
<dbReference type="EnsemblPlants" id="OsLima_07g0021390.01">
    <property type="protein sequence ID" value="OsLima_07g0021390.01"/>
    <property type="gene ID" value="OsLima_07g0021390"/>
</dbReference>
<dbReference type="EnsemblPlants" id="OsMH63_07G021380_01">
    <property type="protein sequence ID" value="OsMH63_07G021380_01"/>
    <property type="gene ID" value="OsMH63_07G021380"/>
</dbReference>
<dbReference type="EnsemblPlants" id="OsPr106_07g0021650.01">
    <property type="protein sequence ID" value="OsPr106_07g0021650.01"/>
    <property type="gene ID" value="OsPr106_07g0021650"/>
</dbReference>
<dbReference type="EnsemblPlants" id="OsZS97_07G021290_01">
    <property type="protein sequence ID" value="OsZS97_07G021290_01"/>
    <property type="gene ID" value="OsZS97_07G021290"/>
</dbReference>
<dbReference type="Gramene" id="BGIOSGA023979-TA">
    <property type="protein sequence ID" value="BGIOSGA023979-PA"/>
    <property type="gene ID" value="BGIOSGA023979"/>
</dbReference>
<dbReference type="Gramene" id="OsGoSa_07g0021440.01">
    <property type="protein sequence ID" value="OsGoSa_07g0021440.01"/>
    <property type="gene ID" value="OsGoSa_07g0021440"/>
</dbReference>
<dbReference type="Gramene" id="OsIR64_07g0022090.01">
    <property type="protein sequence ID" value="OsIR64_07g0022090.01"/>
    <property type="gene ID" value="OsIR64_07g0022090"/>
</dbReference>
<dbReference type="Gramene" id="OsKYG_07g0021540.01">
    <property type="protein sequence ID" value="OsKYG_07g0021540.01"/>
    <property type="gene ID" value="OsKYG_07g0021540"/>
</dbReference>
<dbReference type="Gramene" id="OsLaMu_07g0021420.01">
    <property type="protein sequence ID" value="OsLaMu_07g0021420.01"/>
    <property type="gene ID" value="OsLaMu_07g0021420"/>
</dbReference>
<dbReference type="Gramene" id="OsLima_07g0021390.01">
    <property type="protein sequence ID" value="OsLima_07g0021390.01"/>
    <property type="gene ID" value="OsLima_07g0021390"/>
</dbReference>
<dbReference type="Gramene" id="OsMH63_07G021380_01">
    <property type="protein sequence ID" value="OsMH63_07G021380_01"/>
    <property type="gene ID" value="OsMH63_07G021380"/>
</dbReference>
<dbReference type="Gramene" id="OsPr106_07g0021650.01">
    <property type="protein sequence ID" value="OsPr106_07g0021650.01"/>
    <property type="gene ID" value="OsPr106_07g0021650"/>
</dbReference>
<dbReference type="Gramene" id="OsZS97_07G021290_01">
    <property type="protein sequence ID" value="OsZS97_07G021290_01"/>
    <property type="gene ID" value="OsZS97_07G021290"/>
</dbReference>
<dbReference type="HOGENOM" id="CLU_016249_2_1_1"/>
<dbReference type="OMA" id="EGFFAIQ"/>
<dbReference type="OrthoDB" id="10004661at2759"/>
<dbReference type="Proteomes" id="UP000007015">
    <property type="component" value="Chromosome 7"/>
</dbReference>
<dbReference type="ExpressionAtlas" id="A3BLS0">
    <property type="expression patterns" value="differential"/>
</dbReference>
<dbReference type="GO" id="GO:0005737">
    <property type="term" value="C:cytoplasm"/>
    <property type="evidence" value="ECO:0007669"/>
    <property type="project" value="TreeGrafter"/>
</dbReference>
<dbReference type="GO" id="GO:0016208">
    <property type="term" value="F:AMP binding"/>
    <property type="evidence" value="ECO:0000250"/>
    <property type="project" value="UniProtKB"/>
</dbReference>
<dbReference type="GO" id="GO:0010279">
    <property type="term" value="F:indole-3-acetic acid amido synthetase activity"/>
    <property type="evidence" value="ECO:0000314"/>
    <property type="project" value="UniProtKB"/>
</dbReference>
<dbReference type="GO" id="GO:0009851">
    <property type="term" value="P:auxin biosynthetic process"/>
    <property type="evidence" value="ECO:0000314"/>
    <property type="project" value="GO_Central"/>
</dbReference>
<dbReference type="GO" id="GO:0006952">
    <property type="term" value="P:defense response"/>
    <property type="evidence" value="ECO:0007669"/>
    <property type="project" value="UniProtKB-KW"/>
</dbReference>
<dbReference type="GO" id="GO:0140964">
    <property type="term" value="P:intracellular auxin homeostasis"/>
    <property type="evidence" value="ECO:0000314"/>
    <property type="project" value="UniProtKB"/>
</dbReference>
<dbReference type="GO" id="GO:0009555">
    <property type="term" value="P:pollen development"/>
    <property type="evidence" value="ECO:0000315"/>
    <property type="project" value="UniProtKB"/>
</dbReference>
<dbReference type="GO" id="GO:1900424">
    <property type="term" value="P:regulation of defense response to bacterium"/>
    <property type="evidence" value="ECO:0000315"/>
    <property type="project" value="UniProtKB"/>
</dbReference>
<dbReference type="InterPro" id="IPR004993">
    <property type="entry name" value="GH3"/>
</dbReference>
<dbReference type="InterPro" id="IPR055378">
    <property type="entry name" value="GH3_C"/>
</dbReference>
<dbReference type="InterPro" id="IPR055377">
    <property type="entry name" value="GH3_M"/>
</dbReference>
<dbReference type="PANTHER" id="PTHR31901">
    <property type="entry name" value="GH3 DOMAIN-CONTAINING PROTEIN"/>
    <property type="match status" value="1"/>
</dbReference>
<dbReference type="PANTHER" id="PTHR31901:SF96">
    <property type="entry name" value="INDOLE-3-ACETIC ACID-AMIDO SYNTHETASE GH3.1-RELATED"/>
    <property type="match status" value="1"/>
</dbReference>
<dbReference type="Pfam" id="PF03321">
    <property type="entry name" value="GH3"/>
    <property type="match status" value="1"/>
</dbReference>
<dbReference type="Pfam" id="PF23572">
    <property type="entry name" value="GH3_C"/>
    <property type="match status" value="1"/>
</dbReference>
<dbReference type="Pfam" id="PF23571">
    <property type="entry name" value="GH3_M"/>
    <property type="match status" value="1"/>
</dbReference>
<keyword id="KW-0436">Ligase</keyword>
<keyword id="KW-0611">Plant defense</keyword>
<keyword id="KW-1185">Reference proteome</keyword>